<comment type="function">
    <text evidence="1">Provides the (R)-glutamate required for cell wall biosynthesis.</text>
</comment>
<comment type="catalytic activity">
    <reaction evidence="1">
        <text>L-glutamate = D-glutamate</text>
        <dbReference type="Rhea" id="RHEA:12813"/>
        <dbReference type="ChEBI" id="CHEBI:29985"/>
        <dbReference type="ChEBI" id="CHEBI:29986"/>
        <dbReference type="EC" id="5.1.1.3"/>
    </reaction>
</comment>
<comment type="pathway">
    <text evidence="1">Cell wall biogenesis; peptidoglycan biosynthesis.</text>
</comment>
<comment type="similarity">
    <text evidence="1">Belongs to the aspartate/glutamate racemases family.</text>
</comment>
<dbReference type="EC" id="5.1.1.3" evidence="1"/>
<dbReference type="EMBL" id="CP000805">
    <property type="protein sequence ID" value="ACD70832.1"/>
    <property type="molecule type" value="Genomic_DNA"/>
</dbReference>
<dbReference type="SMR" id="B2S303"/>
<dbReference type="KEGG" id="tpp:TPASS_0406"/>
<dbReference type="PATRIC" id="fig|455434.6.peg.408"/>
<dbReference type="UniPathway" id="UPA00219"/>
<dbReference type="Proteomes" id="UP000001202">
    <property type="component" value="Chromosome"/>
</dbReference>
<dbReference type="GO" id="GO:0008881">
    <property type="term" value="F:glutamate racemase activity"/>
    <property type="evidence" value="ECO:0007669"/>
    <property type="project" value="UniProtKB-UniRule"/>
</dbReference>
<dbReference type="GO" id="GO:0071555">
    <property type="term" value="P:cell wall organization"/>
    <property type="evidence" value="ECO:0007669"/>
    <property type="project" value="UniProtKB-KW"/>
</dbReference>
<dbReference type="GO" id="GO:0009252">
    <property type="term" value="P:peptidoglycan biosynthetic process"/>
    <property type="evidence" value="ECO:0007669"/>
    <property type="project" value="UniProtKB-UniRule"/>
</dbReference>
<dbReference type="GO" id="GO:0008360">
    <property type="term" value="P:regulation of cell shape"/>
    <property type="evidence" value="ECO:0007669"/>
    <property type="project" value="UniProtKB-KW"/>
</dbReference>
<dbReference type="Gene3D" id="3.40.50.1860">
    <property type="match status" value="2"/>
</dbReference>
<dbReference type="HAMAP" id="MF_00258">
    <property type="entry name" value="Glu_racemase"/>
    <property type="match status" value="1"/>
</dbReference>
<dbReference type="InterPro" id="IPR015942">
    <property type="entry name" value="Asp/Glu/hydantoin_racemase"/>
</dbReference>
<dbReference type="InterPro" id="IPR001920">
    <property type="entry name" value="Asp/Glu_race"/>
</dbReference>
<dbReference type="InterPro" id="IPR018187">
    <property type="entry name" value="Asp/Glu_racemase_AS_1"/>
</dbReference>
<dbReference type="InterPro" id="IPR004391">
    <property type="entry name" value="Glu_race"/>
</dbReference>
<dbReference type="NCBIfam" id="TIGR00067">
    <property type="entry name" value="glut_race"/>
    <property type="match status" value="1"/>
</dbReference>
<dbReference type="PANTHER" id="PTHR21198">
    <property type="entry name" value="GLUTAMATE RACEMASE"/>
    <property type="match status" value="1"/>
</dbReference>
<dbReference type="PANTHER" id="PTHR21198:SF2">
    <property type="entry name" value="GLUTAMATE RACEMASE"/>
    <property type="match status" value="1"/>
</dbReference>
<dbReference type="Pfam" id="PF01177">
    <property type="entry name" value="Asp_Glu_race"/>
    <property type="match status" value="1"/>
</dbReference>
<dbReference type="SUPFAM" id="SSF53681">
    <property type="entry name" value="Aspartate/glutamate racemase"/>
    <property type="match status" value="2"/>
</dbReference>
<dbReference type="PROSITE" id="PS00923">
    <property type="entry name" value="ASP_GLU_RACEMASE_1"/>
    <property type="match status" value="1"/>
</dbReference>
<organism>
    <name type="scientific">Treponema pallidum subsp. pallidum (strain SS14)</name>
    <dbReference type="NCBI Taxonomy" id="455434"/>
    <lineage>
        <taxon>Bacteria</taxon>
        <taxon>Pseudomonadati</taxon>
        <taxon>Spirochaetota</taxon>
        <taxon>Spirochaetia</taxon>
        <taxon>Spirochaetales</taxon>
        <taxon>Treponemataceae</taxon>
        <taxon>Treponema</taxon>
    </lineage>
</organism>
<keyword id="KW-0133">Cell shape</keyword>
<keyword id="KW-0961">Cell wall biogenesis/degradation</keyword>
<keyword id="KW-0413">Isomerase</keyword>
<keyword id="KW-0573">Peptidoglycan synthesis</keyword>
<reference key="1">
    <citation type="journal article" date="2008" name="BMC Microbiol.">
        <title>Complete genome sequence of Treponema pallidum ssp. pallidum strain SS14 determined with oligonucleotide arrays.</title>
        <authorList>
            <person name="Matejkova P."/>
            <person name="Strouhal M."/>
            <person name="Smajs D."/>
            <person name="Norris S.J."/>
            <person name="Palzkill T."/>
            <person name="Petrosino J.F."/>
            <person name="Sodergren E."/>
            <person name="Norton J.E."/>
            <person name="Singh J."/>
            <person name="Richmond T.A."/>
            <person name="Molla M.N."/>
            <person name="Albert T.J."/>
            <person name="Weinstock G.M."/>
        </authorList>
    </citation>
    <scope>NUCLEOTIDE SEQUENCE [LARGE SCALE GENOMIC DNA]</scope>
    <source>
        <strain>SS14</strain>
    </source>
</reference>
<proteinExistence type="inferred from homology"/>
<protein>
    <recommendedName>
        <fullName evidence="1">Glutamate racemase</fullName>
        <ecNumber evidence="1">5.1.1.3</ecNumber>
    </recommendedName>
</protein>
<feature type="chain" id="PRO_1000114073" description="Glutamate racemase">
    <location>
        <begin position="1"/>
        <end position="268"/>
    </location>
</feature>
<feature type="active site" description="Proton donor/acceptor" evidence="1">
    <location>
        <position position="78"/>
    </location>
</feature>
<feature type="active site" description="Proton donor/acceptor" evidence="1">
    <location>
        <position position="190"/>
    </location>
</feature>
<feature type="binding site" evidence="1">
    <location>
        <begin position="14"/>
        <end position="15"/>
    </location>
    <ligand>
        <name>substrate</name>
    </ligand>
</feature>
<feature type="binding site" evidence="1">
    <location>
        <begin position="46"/>
        <end position="47"/>
    </location>
    <ligand>
        <name>substrate</name>
    </ligand>
</feature>
<feature type="binding site" evidence="1">
    <location>
        <begin position="79"/>
        <end position="80"/>
    </location>
    <ligand>
        <name>substrate</name>
    </ligand>
</feature>
<feature type="binding site" evidence="1">
    <location>
        <begin position="191"/>
        <end position="192"/>
    </location>
    <ligand>
        <name>substrate</name>
    </ligand>
</feature>
<accession>B2S303</accession>
<gene>
    <name evidence="1" type="primary">murI</name>
    <name type="ordered locus">TPASS_0406</name>
</gene>
<name>MURI_TREPS</name>
<evidence type="ECO:0000255" key="1">
    <source>
        <dbReference type="HAMAP-Rule" id="MF_00258"/>
    </source>
</evidence>
<sequence length="268" mass="29449">MSDRREQFQYAFLDSGIGGLPYAHALRVRVPEASLVYVADRVYFPYGNKSSAQIIARASAVLQKVQTNFSPHIVVLACNSMSVNALEFLRAQVSVPVVGVVPAIKQAVACSHKKHIGVLATQCTITHPYTACLRAQFGAGCVFQMRADARLIECLERGLIFEVEDMQREAVARSVMPFQEAGVDVLVLACTHFVHVRHLFQDCVGTSCTVVDSLEGVVRRTLRLCPPQSQLRGNAACYVTGARDAVCAARYARYAQHFGLRWAGFLDV</sequence>